<dbReference type="EC" id="1.11.1.6"/>
<dbReference type="EMBL" id="AJ295151">
    <property type="protein sequence ID" value="CAC14836.1"/>
    <property type="molecule type" value="Genomic_DNA"/>
</dbReference>
<dbReference type="RefSeq" id="WP_042363380.1">
    <property type="nucleotide sequence ID" value="NZ_CABIVW010000018.1"/>
</dbReference>
<dbReference type="SMR" id="Q9EV50"/>
<dbReference type="STRING" id="1288.AWC37_13125"/>
<dbReference type="GeneID" id="45498001"/>
<dbReference type="KEGG" id="sxl:SXYLSMQ121_2340"/>
<dbReference type="KEGG" id="sxo:SXYL_02505"/>
<dbReference type="eggNOG" id="COG0753">
    <property type="taxonomic scope" value="Bacteria"/>
</dbReference>
<dbReference type="GO" id="GO:0005737">
    <property type="term" value="C:cytoplasm"/>
    <property type="evidence" value="ECO:0007669"/>
    <property type="project" value="TreeGrafter"/>
</dbReference>
<dbReference type="GO" id="GO:0004096">
    <property type="term" value="F:catalase activity"/>
    <property type="evidence" value="ECO:0007669"/>
    <property type="project" value="UniProtKB-EC"/>
</dbReference>
<dbReference type="GO" id="GO:0020037">
    <property type="term" value="F:heme binding"/>
    <property type="evidence" value="ECO:0007669"/>
    <property type="project" value="InterPro"/>
</dbReference>
<dbReference type="GO" id="GO:0046872">
    <property type="term" value="F:metal ion binding"/>
    <property type="evidence" value="ECO:0007669"/>
    <property type="project" value="UniProtKB-KW"/>
</dbReference>
<dbReference type="GO" id="GO:0042744">
    <property type="term" value="P:hydrogen peroxide catabolic process"/>
    <property type="evidence" value="ECO:0007669"/>
    <property type="project" value="UniProtKB-KW"/>
</dbReference>
<dbReference type="GO" id="GO:0042542">
    <property type="term" value="P:response to hydrogen peroxide"/>
    <property type="evidence" value="ECO:0007669"/>
    <property type="project" value="TreeGrafter"/>
</dbReference>
<dbReference type="CDD" id="cd08156">
    <property type="entry name" value="catalase_clade_3"/>
    <property type="match status" value="1"/>
</dbReference>
<dbReference type="FunFam" id="2.40.180.10:FF:000001">
    <property type="entry name" value="Catalase"/>
    <property type="match status" value="1"/>
</dbReference>
<dbReference type="Gene3D" id="2.40.180.10">
    <property type="entry name" value="Catalase core domain"/>
    <property type="match status" value="1"/>
</dbReference>
<dbReference type="InterPro" id="IPR018028">
    <property type="entry name" value="Catalase"/>
</dbReference>
<dbReference type="InterPro" id="IPR040333">
    <property type="entry name" value="Catalase_3"/>
</dbReference>
<dbReference type="InterPro" id="IPR024708">
    <property type="entry name" value="Catalase_AS"/>
</dbReference>
<dbReference type="InterPro" id="IPR024711">
    <property type="entry name" value="Catalase_clade1/3"/>
</dbReference>
<dbReference type="InterPro" id="IPR011614">
    <property type="entry name" value="Catalase_core"/>
</dbReference>
<dbReference type="InterPro" id="IPR002226">
    <property type="entry name" value="Catalase_haem_BS"/>
</dbReference>
<dbReference type="InterPro" id="IPR010582">
    <property type="entry name" value="Catalase_immune_responsive"/>
</dbReference>
<dbReference type="InterPro" id="IPR020835">
    <property type="entry name" value="Catalase_sf"/>
</dbReference>
<dbReference type="PANTHER" id="PTHR11465">
    <property type="entry name" value="CATALASE"/>
    <property type="match status" value="1"/>
</dbReference>
<dbReference type="PANTHER" id="PTHR11465:SF61">
    <property type="entry name" value="CATALASE"/>
    <property type="match status" value="1"/>
</dbReference>
<dbReference type="Pfam" id="PF00199">
    <property type="entry name" value="Catalase"/>
    <property type="match status" value="1"/>
</dbReference>
<dbReference type="Pfam" id="PF06628">
    <property type="entry name" value="Catalase-rel"/>
    <property type="match status" value="1"/>
</dbReference>
<dbReference type="PIRSF" id="PIRSF038928">
    <property type="entry name" value="Catalase_clade1-3"/>
    <property type="match status" value="1"/>
</dbReference>
<dbReference type="PRINTS" id="PR00067">
    <property type="entry name" value="CATALASE"/>
</dbReference>
<dbReference type="SMART" id="SM01060">
    <property type="entry name" value="Catalase"/>
    <property type="match status" value="1"/>
</dbReference>
<dbReference type="SUPFAM" id="SSF56634">
    <property type="entry name" value="Heme-dependent catalase-like"/>
    <property type="match status" value="1"/>
</dbReference>
<dbReference type="PROSITE" id="PS00437">
    <property type="entry name" value="CATALASE_1"/>
    <property type="match status" value="1"/>
</dbReference>
<dbReference type="PROSITE" id="PS00438">
    <property type="entry name" value="CATALASE_2"/>
    <property type="match status" value="1"/>
</dbReference>
<dbReference type="PROSITE" id="PS51402">
    <property type="entry name" value="CATALASE_3"/>
    <property type="match status" value="1"/>
</dbReference>
<organism>
    <name type="scientific">Staphylococcus xylosus</name>
    <dbReference type="NCBI Taxonomy" id="1288"/>
    <lineage>
        <taxon>Bacteria</taxon>
        <taxon>Bacillati</taxon>
        <taxon>Bacillota</taxon>
        <taxon>Bacilli</taxon>
        <taxon>Bacillales</taxon>
        <taxon>Staphylococcaceae</taxon>
        <taxon>Staphylococcus</taxon>
    </lineage>
</organism>
<protein>
    <recommendedName>
        <fullName>Catalase A</fullName>
        <ecNumber>1.11.1.6</ecNumber>
    </recommendedName>
</protein>
<evidence type="ECO:0000250" key="1"/>
<evidence type="ECO:0000255" key="2">
    <source>
        <dbReference type="PROSITE-ProRule" id="PRU10013"/>
    </source>
</evidence>
<evidence type="ECO:0000256" key="3">
    <source>
        <dbReference type="SAM" id="MobiDB-lite"/>
    </source>
</evidence>
<evidence type="ECO:0000305" key="4"/>
<sequence length="493" mass="56875">MKRKLTGLFGAPVSDRENSMTAGPRGPLLMQDIYFLEQMAHFDREVIPERRMHAKGSGAFGTFTVTNDITKYTCASIFAEVGKQTEMFARFSTVAGERGAGDAERDIRGFALKFYTDEGNWDLVGNNTPVFFFRDPKLFPSLNHVVKRNPKTNMKDPQANWDFWTLLPEALHQITILMTDRGIPKGFRNMHGFGSHTYSMYNDKGERFWVKFHHRTQQGIENYSAEEAEQVMAKDRDSSQRDLFNNIEQGNFPKWKMYIQVMTEEQARNHKDNPFDLTKVWYKDEYPLIEVGEFELNRNPENYFQDVEQAAFAPTNIVPGLDFSPDKMLQGRLFSYGDTQRYRLGVNHWQIPVNQPKGVGMENICPFSRDGHMRILDNNQGASTHYYPNSNGAFEDQPQYKKPALDIQGQAYEYDFREDDDNYFEQPGKLFRLLSSEEQQILFNNTANEMSPVTDALKHRHIRHCYKADPAYGQGVAEAMGIDINEVDLDVAD</sequence>
<keyword id="KW-0349">Heme</keyword>
<keyword id="KW-0376">Hydrogen peroxide</keyword>
<keyword id="KW-0408">Iron</keyword>
<keyword id="KW-0479">Metal-binding</keyword>
<keyword id="KW-0560">Oxidoreductase</keyword>
<keyword id="KW-0575">Peroxidase</keyword>
<gene>
    <name type="primary">katA</name>
</gene>
<reference key="1">
    <citation type="journal article" date="2002" name="FEMS Microbiol. Lett.">
        <title>Characterisation of the katA gene encoding a catalase and evidence for at least a second catalase activity in Staphylococcus xylosus, bacteria used in food fermentation.</title>
        <authorList>
            <person name="Barriere C."/>
            <person name="Bruckner R."/>
            <person name="Centeno D."/>
            <person name="Talon R."/>
        </authorList>
    </citation>
    <scope>NUCLEOTIDE SEQUENCE [GENOMIC DNA]</scope>
</reference>
<proteinExistence type="inferred from homology"/>
<comment type="function">
    <text evidence="1">Decomposes hydrogen peroxide into water and oxygen; serves to protect cells from the toxic effects of hydrogen peroxide.</text>
</comment>
<comment type="catalytic activity">
    <reaction evidence="2">
        <text>2 H2O2 = O2 + 2 H2O</text>
        <dbReference type="Rhea" id="RHEA:20309"/>
        <dbReference type="ChEBI" id="CHEBI:15377"/>
        <dbReference type="ChEBI" id="CHEBI:15379"/>
        <dbReference type="ChEBI" id="CHEBI:16240"/>
        <dbReference type="EC" id="1.11.1.6"/>
    </reaction>
</comment>
<comment type="cofactor">
    <cofactor evidence="1">
        <name>heme</name>
        <dbReference type="ChEBI" id="CHEBI:30413"/>
    </cofactor>
</comment>
<comment type="subunit">
    <text evidence="1">Homodimer.</text>
</comment>
<comment type="similarity">
    <text evidence="4">Belongs to the catalase family.</text>
</comment>
<name>CATA_STAXY</name>
<feature type="chain" id="PRO_0000085009" description="Catalase A">
    <location>
        <begin position="1"/>
        <end position="493"/>
    </location>
</feature>
<feature type="region of interest" description="Disordered" evidence="3">
    <location>
        <begin position="1"/>
        <end position="24"/>
    </location>
</feature>
<feature type="active site" evidence="2">
    <location>
        <position position="53"/>
    </location>
</feature>
<feature type="active site" evidence="2">
    <location>
        <position position="126"/>
    </location>
</feature>
<feature type="binding site" description="axial binding residue" evidence="1">
    <location>
        <position position="336"/>
    </location>
    <ligand>
        <name>heme</name>
        <dbReference type="ChEBI" id="CHEBI:30413"/>
    </ligand>
    <ligandPart>
        <name>Fe</name>
        <dbReference type="ChEBI" id="CHEBI:18248"/>
    </ligandPart>
</feature>
<accession>Q9EV50</accession>